<name>MNK_CAEEL</name>
<dbReference type="EC" id="2.7.11.1" evidence="1"/>
<dbReference type="EMBL" id="BX284602">
    <property type="protein sequence ID" value="CAA90665.2"/>
    <property type="molecule type" value="Genomic_DNA"/>
</dbReference>
<dbReference type="EMBL" id="BX284602">
    <property type="protein sequence ID" value="CAD59152.2"/>
    <property type="molecule type" value="Genomic_DNA"/>
</dbReference>
<dbReference type="PIR" id="T24230">
    <property type="entry name" value="T24230"/>
</dbReference>
<dbReference type="RefSeq" id="NP_496272.2">
    <molecule id="Q8I113-2"/>
    <property type="nucleotide sequence ID" value="NM_063871.6"/>
</dbReference>
<dbReference type="RefSeq" id="NP_871924.2">
    <molecule id="Q8I113-1"/>
    <property type="nucleotide sequence ID" value="NM_182124.8"/>
</dbReference>
<dbReference type="SMR" id="Q8I113"/>
<dbReference type="FunCoup" id="Q8I113">
    <property type="interactions" value="693"/>
</dbReference>
<dbReference type="STRING" id="6239.R166.5b.1"/>
<dbReference type="PaxDb" id="6239-R166.5b"/>
<dbReference type="EnsemblMetazoa" id="R166.5a.1">
    <molecule id="Q8I113-2"/>
    <property type="protein sequence ID" value="R166.5a.1"/>
    <property type="gene ID" value="WBGene00011304"/>
</dbReference>
<dbReference type="EnsemblMetazoa" id="R166.5b.1">
    <molecule id="Q8I113-1"/>
    <property type="protein sequence ID" value="R166.5b.1"/>
    <property type="gene ID" value="WBGene00011304"/>
</dbReference>
<dbReference type="EnsemblMetazoa" id="R166.5b.2">
    <molecule id="Q8I113-1"/>
    <property type="protein sequence ID" value="R166.5b.2"/>
    <property type="gene ID" value="WBGene00011304"/>
</dbReference>
<dbReference type="EnsemblMetazoa" id="R166.5b.3">
    <molecule id="Q8I113-1"/>
    <property type="protein sequence ID" value="R166.5b.3"/>
    <property type="gene ID" value="WBGene00011304"/>
</dbReference>
<dbReference type="GeneID" id="174623"/>
<dbReference type="KEGG" id="cel:CELE_R166.5"/>
<dbReference type="UCSC" id="R166.5a">
    <property type="organism name" value="c. elegans"/>
</dbReference>
<dbReference type="AGR" id="WB:WBGene00011304"/>
<dbReference type="CTD" id="174623"/>
<dbReference type="WormBase" id="R166.5a">
    <molecule id="Q8I113-2"/>
    <property type="protein sequence ID" value="CE40867"/>
    <property type="gene ID" value="WBGene00011304"/>
    <property type="gene designation" value="mnk-1"/>
</dbReference>
<dbReference type="WormBase" id="R166.5b">
    <molecule id="Q8I113-1"/>
    <property type="protein sequence ID" value="CE40868"/>
    <property type="gene ID" value="WBGene00011304"/>
    <property type="gene designation" value="mnk-1"/>
</dbReference>
<dbReference type="eggNOG" id="KOG0607">
    <property type="taxonomic scope" value="Eukaryota"/>
</dbReference>
<dbReference type="GeneTree" id="ENSGT00940000154587"/>
<dbReference type="InParanoid" id="Q8I113"/>
<dbReference type="OMA" id="FHRIQDG"/>
<dbReference type="OrthoDB" id="5794026at2759"/>
<dbReference type="PhylomeDB" id="Q8I113"/>
<dbReference type="PRO" id="PR:Q8I113"/>
<dbReference type="Proteomes" id="UP000001940">
    <property type="component" value="Chromosome II"/>
</dbReference>
<dbReference type="Bgee" id="WBGene00011304">
    <property type="expression patterns" value="Expressed in pharyngeal muscle cell (C elegans) and 3 other cell types or tissues"/>
</dbReference>
<dbReference type="GO" id="GO:0005737">
    <property type="term" value="C:cytoplasm"/>
    <property type="evidence" value="ECO:0000318"/>
    <property type="project" value="GO_Central"/>
</dbReference>
<dbReference type="GO" id="GO:0005634">
    <property type="term" value="C:nucleus"/>
    <property type="evidence" value="ECO:0000314"/>
    <property type="project" value="WormBase"/>
</dbReference>
<dbReference type="GO" id="GO:0005524">
    <property type="term" value="F:ATP binding"/>
    <property type="evidence" value="ECO:0007669"/>
    <property type="project" value="UniProtKB-KW"/>
</dbReference>
<dbReference type="GO" id="GO:0009931">
    <property type="term" value="F:calcium-dependent protein serine/threonine kinase activity"/>
    <property type="evidence" value="ECO:0000318"/>
    <property type="project" value="GO_Central"/>
</dbReference>
<dbReference type="GO" id="GO:0004683">
    <property type="term" value="F:calcium/calmodulin-dependent protein kinase activity"/>
    <property type="evidence" value="ECO:0000318"/>
    <property type="project" value="GO_Central"/>
</dbReference>
<dbReference type="GO" id="GO:0005516">
    <property type="term" value="F:calmodulin binding"/>
    <property type="evidence" value="ECO:0000318"/>
    <property type="project" value="GO_Central"/>
</dbReference>
<dbReference type="GO" id="GO:0046872">
    <property type="term" value="F:metal ion binding"/>
    <property type="evidence" value="ECO:0007669"/>
    <property type="project" value="UniProtKB-KW"/>
</dbReference>
<dbReference type="GO" id="GO:0106310">
    <property type="term" value="F:protein serine kinase activity"/>
    <property type="evidence" value="ECO:0007669"/>
    <property type="project" value="RHEA"/>
</dbReference>
<dbReference type="GO" id="GO:0035095">
    <property type="term" value="P:behavioral response to nicotine"/>
    <property type="evidence" value="ECO:0000315"/>
    <property type="project" value="UniProtKB"/>
</dbReference>
<dbReference type="GO" id="GO:0008340">
    <property type="term" value="P:determination of adult lifespan"/>
    <property type="evidence" value="ECO:0000315"/>
    <property type="project" value="UniProtKB"/>
</dbReference>
<dbReference type="GO" id="GO:0035556">
    <property type="term" value="P:intracellular signal transduction"/>
    <property type="evidence" value="ECO:0000318"/>
    <property type="project" value="GO_Central"/>
</dbReference>
<dbReference type="GO" id="GO:0060625">
    <property type="term" value="P:regulation of protein deneddylation"/>
    <property type="evidence" value="ECO:0000316"/>
    <property type="project" value="WormBase"/>
</dbReference>
<dbReference type="FunFam" id="3.30.200.20:FF:000906">
    <property type="entry name" value="CRE-MNK-1 protein"/>
    <property type="match status" value="1"/>
</dbReference>
<dbReference type="FunFam" id="1.10.510.10:FF:001181">
    <property type="entry name" value="MAP kinase-interacting serine/threonine-protein kinase mnk-1"/>
    <property type="match status" value="1"/>
</dbReference>
<dbReference type="Gene3D" id="3.30.200.20">
    <property type="entry name" value="Phosphorylase Kinase, domain 1"/>
    <property type="match status" value="1"/>
</dbReference>
<dbReference type="Gene3D" id="1.10.510.10">
    <property type="entry name" value="Transferase(Phosphotransferase) domain 1"/>
    <property type="match status" value="1"/>
</dbReference>
<dbReference type="InterPro" id="IPR050205">
    <property type="entry name" value="CDPK_Ser/Thr_kinases"/>
</dbReference>
<dbReference type="InterPro" id="IPR011009">
    <property type="entry name" value="Kinase-like_dom_sf"/>
</dbReference>
<dbReference type="InterPro" id="IPR000719">
    <property type="entry name" value="Prot_kinase_dom"/>
</dbReference>
<dbReference type="InterPro" id="IPR017441">
    <property type="entry name" value="Protein_kinase_ATP_BS"/>
</dbReference>
<dbReference type="InterPro" id="IPR008271">
    <property type="entry name" value="Ser/Thr_kinase_AS"/>
</dbReference>
<dbReference type="PANTHER" id="PTHR24349">
    <property type="entry name" value="SERINE/THREONINE-PROTEIN KINASE"/>
    <property type="match status" value="1"/>
</dbReference>
<dbReference type="Pfam" id="PF00069">
    <property type="entry name" value="Pkinase"/>
    <property type="match status" value="1"/>
</dbReference>
<dbReference type="SMART" id="SM00220">
    <property type="entry name" value="S_TKc"/>
    <property type="match status" value="1"/>
</dbReference>
<dbReference type="SUPFAM" id="SSF56112">
    <property type="entry name" value="Protein kinase-like (PK-like)"/>
    <property type="match status" value="1"/>
</dbReference>
<dbReference type="PROSITE" id="PS00107">
    <property type="entry name" value="PROTEIN_KINASE_ATP"/>
    <property type="match status" value="1"/>
</dbReference>
<dbReference type="PROSITE" id="PS50011">
    <property type="entry name" value="PROTEIN_KINASE_DOM"/>
    <property type="match status" value="1"/>
</dbReference>
<dbReference type="PROSITE" id="PS00108">
    <property type="entry name" value="PROTEIN_KINASE_ST"/>
    <property type="match status" value="1"/>
</dbReference>
<feature type="chain" id="PRO_0000438684" description="MAP kinase-interacting serine/threonine-protein kinase mnk-1" evidence="8">
    <location>
        <begin position="1"/>
        <end position="707"/>
    </location>
</feature>
<feature type="domain" description="Protein kinase" evidence="2">
    <location>
        <begin position="203"/>
        <end position="493"/>
    </location>
</feature>
<feature type="region of interest" description="Disordered" evidence="3">
    <location>
        <begin position="1"/>
        <end position="29"/>
    </location>
</feature>
<feature type="region of interest" description="Disordered" evidence="3">
    <location>
        <begin position="101"/>
        <end position="131"/>
    </location>
</feature>
<feature type="region of interest" description="Disordered" evidence="3">
    <location>
        <begin position="589"/>
        <end position="628"/>
    </location>
</feature>
<feature type="region of interest" description="Disordered" evidence="3">
    <location>
        <begin position="688"/>
        <end position="707"/>
    </location>
</feature>
<feature type="compositionally biased region" description="Polar residues" evidence="3">
    <location>
        <begin position="1"/>
        <end position="24"/>
    </location>
</feature>
<feature type="active site" description="Proton acceptor" evidence="2">
    <location>
        <position position="325"/>
    </location>
</feature>
<feature type="binding site" evidence="2">
    <location>
        <begin position="209"/>
        <end position="217"/>
    </location>
    <ligand>
        <name>ATP</name>
        <dbReference type="ChEBI" id="CHEBI:30616"/>
    </ligand>
</feature>
<feature type="binding site" evidence="2">
    <location>
        <position position="232"/>
    </location>
    <ligand>
        <name>ATP</name>
        <dbReference type="ChEBI" id="CHEBI:30616"/>
    </ligand>
</feature>
<feature type="splice variant" id="VSP_058707" description="In isoform a." evidence="8">
    <original>FFLDNTDSMTSSSRGITMPNTISSHEDVGGYSPRKVGIQHDY</original>
    <variation>TILHAGYPQSPVVHFGRHHNVNINQLNLNHLGQVDNIPNN</variation>
    <location>
        <begin position="2"/>
        <end position="43"/>
    </location>
</feature>
<accession>Q8I113</accession>
<accession>Q22005</accession>
<comment type="function">
    <text evidence="4 5 6">Serine/threonine-protein kinase which is required in the germline to positively regulate lifespan (PubMed:17277769). May play a role in body wall muscle contraction (PubMed:25851606). May be involved in embryonic cytokinesis (PubMed:19528325).</text>
</comment>
<comment type="catalytic activity">
    <reaction evidence="1">
        <text>L-seryl-[protein] + ATP = O-phospho-L-seryl-[protein] + ADP + H(+)</text>
        <dbReference type="Rhea" id="RHEA:17989"/>
        <dbReference type="Rhea" id="RHEA-COMP:9863"/>
        <dbReference type="Rhea" id="RHEA-COMP:11604"/>
        <dbReference type="ChEBI" id="CHEBI:15378"/>
        <dbReference type="ChEBI" id="CHEBI:29999"/>
        <dbReference type="ChEBI" id="CHEBI:30616"/>
        <dbReference type="ChEBI" id="CHEBI:83421"/>
        <dbReference type="ChEBI" id="CHEBI:456216"/>
        <dbReference type="EC" id="2.7.11.1"/>
    </reaction>
</comment>
<comment type="catalytic activity">
    <reaction evidence="1">
        <text>L-threonyl-[protein] + ATP = O-phospho-L-threonyl-[protein] + ADP + H(+)</text>
        <dbReference type="Rhea" id="RHEA:46608"/>
        <dbReference type="Rhea" id="RHEA-COMP:11060"/>
        <dbReference type="Rhea" id="RHEA-COMP:11605"/>
        <dbReference type="ChEBI" id="CHEBI:15378"/>
        <dbReference type="ChEBI" id="CHEBI:30013"/>
        <dbReference type="ChEBI" id="CHEBI:30616"/>
        <dbReference type="ChEBI" id="CHEBI:61977"/>
        <dbReference type="ChEBI" id="CHEBI:456216"/>
        <dbReference type="EC" id="2.7.11.1"/>
    </reaction>
</comment>
<comment type="cofactor">
    <cofactor evidence="1">
        <name>Mg(2+)</name>
        <dbReference type="ChEBI" id="CHEBI:18420"/>
    </cofactor>
</comment>
<comment type="subcellular location">
    <subcellularLocation>
        <location evidence="5">Nucleus</location>
    </subcellularLocation>
    <subcellularLocation>
        <location evidence="5">Cytoplasm</location>
    </subcellularLocation>
    <text evidence="5">Predominantly localizes in the nucleus in the 1- and 2-cell embryos.</text>
</comment>
<comment type="alternative products">
    <event type="alternative splicing"/>
    <isoform>
        <id>Q8I113-1</id>
        <name evidence="11">b</name>
        <sequence type="displayed"/>
    </isoform>
    <isoform>
        <id>Q8I113-2</id>
        <name evidence="10">a</name>
        <sequence type="described" ref="VSP_058707"/>
    </isoform>
</comment>
<comment type="tissue specificity">
    <text evidence="6">Expressed in pharynx, intestine, vulva and body wall muscles.</text>
</comment>
<comment type="disruption phenotype">
    <text evidence="4 5">RNAi-mediated knockdown causes a reduction in lifespan but not in a glp-4 bn2 mutant background. In an ife-2 ok306 mutant background, partially reduces the lifespan increase (PubMed:17277769). In a rfl-1 or198 mutant background, partially rescues embryonic viability by restoring normal cytokinesis (PubMed:19528325).</text>
</comment>
<comment type="similarity">
    <text evidence="8">Belongs to the protein kinase superfamily. CAMK Ser/Thr protein kinase family.</text>
</comment>
<keyword id="KW-0025">Alternative splicing</keyword>
<keyword id="KW-0067">ATP-binding</keyword>
<keyword id="KW-0963">Cytoplasm</keyword>
<keyword id="KW-0418">Kinase</keyword>
<keyword id="KW-0460">Magnesium</keyword>
<keyword id="KW-0479">Metal-binding</keyword>
<keyword id="KW-0547">Nucleotide-binding</keyword>
<keyword id="KW-0539">Nucleus</keyword>
<keyword id="KW-1185">Reference proteome</keyword>
<keyword id="KW-0723">Serine/threonine-protein kinase</keyword>
<keyword id="KW-0808">Transferase</keyword>
<proteinExistence type="evidence at transcript level"/>
<gene>
    <name evidence="11" type="primary">mnk-1</name>
    <name evidence="11" type="ORF">R166.5</name>
</gene>
<organism evidence="9">
    <name type="scientific">Caenorhabditis elegans</name>
    <dbReference type="NCBI Taxonomy" id="6239"/>
    <lineage>
        <taxon>Eukaryota</taxon>
        <taxon>Metazoa</taxon>
        <taxon>Ecdysozoa</taxon>
        <taxon>Nematoda</taxon>
        <taxon>Chromadorea</taxon>
        <taxon>Rhabditida</taxon>
        <taxon>Rhabditina</taxon>
        <taxon>Rhabditomorpha</taxon>
        <taxon>Rhabditoidea</taxon>
        <taxon>Rhabditidae</taxon>
        <taxon>Peloderinae</taxon>
        <taxon>Caenorhabditis</taxon>
    </lineage>
</organism>
<protein>
    <recommendedName>
        <fullName evidence="8">MAP kinase-interacting serine/threonine-protein kinase mnk-1</fullName>
        <ecNumber evidence="1">2.7.11.1</ecNumber>
    </recommendedName>
    <alternativeName>
        <fullName evidence="7">MAP kinase integrating kinase-1</fullName>
    </alternativeName>
</protein>
<reference evidence="9" key="1">
    <citation type="journal article" date="1998" name="Science">
        <title>Genome sequence of the nematode C. elegans: a platform for investigating biology.</title>
        <authorList>
            <consortium name="The C. elegans sequencing consortium"/>
        </authorList>
    </citation>
    <scope>NUCLEOTIDE SEQUENCE [LARGE SCALE GENOMIC DNA]</scope>
    <source>
        <strain evidence="9">Bristol N2</strain>
    </source>
</reference>
<reference evidence="8" key="2">
    <citation type="journal article" date="2007" name="Nature">
        <title>eIF4E function in somatic cells modulates ageing in Caenorhabditis elegans.</title>
        <authorList>
            <person name="Syntichaki P."/>
            <person name="Troulinaki K."/>
            <person name="Tavernarakis N."/>
        </authorList>
    </citation>
    <scope>FUNCTION</scope>
    <scope>DISRUPTION PHENOTYPE</scope>
</reference>
<reference evidence="8" key="3">
    <citation type="journal article" date="2009" name="Genetics">
        <title>Using RNA interference to identify specific modifiers of a temperature-sensitive, embryonic-lethal mutation in the Caenorhabditis elegans ubiquitin-like Nedd8 protein modification pathway E1-activating gene rfl-1.</title>
        <authorList>
            <person name="Dorfman M."/>
            <person name="Gomes J.E."/>
            <person name="O'Rourke S."/>
            <person name="Bowerman B."/>
        </authorList>
    </citation>
    <scope>FUNCTION</scope>
    <scope>SUBCELLULAR LOCATION</scope>
    <scope>DISRUPTION PHENOTYPE</scope>
</reference>
<reference evidence="8" key="4">
    <citation type="journal article" date="2015" name="Mol. Biol. Cell">
        <title>Twitchin kinase interacts with MAPKAP kinase 2 in Caenorhabditis elegans striated muscle.</title>
        <authorList>
            <person name="Matsunaga Y."/>
            <person name="Qadota H."/>
            <person name="Furukawa M."/>
            <person name="Choe H.H."/>
            <person name="Benian G.M."/>
        </authorList>
    </citation>
    <scope>FUNCTION</scope>
    <scope>ALTERNATIVE SPLICING</scope>
    <scope>TISSUE SPECIFICITY</scope>
</reference>
<sequence length="707" mass="78934">MFFLDNTDSMTSSSRGITMPNTISSHEDVGGYSPRKVGIQHDYSAVGGGGAAFHHLHTSAATPRHVATSEFYDDEEATSPRGGIEIGAGGGKMMANLRRHRQRERETYEDEDVLSSSDESSGRPIPRYVGRDTDHVFGEFEMDDEDVVMRREDGYGEDETDEDYFDEEEPVAELLPLGGGTRRVPRTPGRKNSSKCGFFDYYKLTDEHLGSGAYGSVTTCKSIKSGVEYAVKIVDKQGETHSRKRILREVNIFKTCKDHPNIVQLLDWFEDETNFYLVMEKMRGGPLLQHILQRKYFTEEEARRVTKDISLALKFMHDRGIAHRDVKPENVLCTDPNHVSPVKLCDLDLASQRPPQHERHPLSQVASEPDLASPVGSAEFMAPEVVDAYVGDSLKYDKKCDTWSLGVILYIMLAGYAPFQGMCDDEDCGWSEGKPCEDCQQDLFHRIQDGYYEFPEEEWGMISEEAKDLVSNLLKRDPVDRFNADQILSHRWLQQSAASTILQTPSNLINRKDSARDVQQMSEHFNLMNRLADTRLSARFDNKMTMSECGSDLGTATIHGDGSFLSMGGEPFGTFPRKKSVGIAIEKSRSGEFTPPISRASPTTPPPSMLNLSEDLTDSPVKRRSADDSGTFSLFSPASSNGDDSICSPPMVFVDMPSIQLFGTGALLTSVQMTPRHTTEDDASLKSFEDEQENANPIHRIETQVNV</sequence>
<evidence type="ECO:0000250" key="1">
    <source>
        <dbReference type="UniProtKB" id="Q9BUB5"/>
    </source>
</evidence>
<evidence type="ECO:0000255" key="2">
    <source>
        <dbReference type="PROSITE-ProRule" id="PRU00159"/>
    </source>
</evidence>
<evidence type="ECO:0000256" key="3">
    <source>
        <dbReference type="SAM" id="MobiDB-lite"/>
    </source>
</evidence>
<evidence type="ECO:0000269" key="4">
    <source>
    </source>
</evidence>
<evidence type="ECO:0000269" key="5">
    <source>
    </source>
</evidence>
<evidence type="ECO:0000269" key="6">
    <source>
    </source>
</evidence>
<evidence type="ECO:0000303" key="7">
    <source>
    </source>
</evidence>
<evidence type="ECO:0000305" key="8"/>
<evidence type="ECO:0000312" key="9">
    <source>
        <dbReference type="Proteomes" id="UP000001940"/>
    </source>
</evidence>
<evidence type="ECO:0000312" key="10">
    <source>
        <dbReference type="WormBase" id="R166.5a"/>
    </source>
</evidence>
<evidence type="ECO:0000312" key="11">
    <source>
        <dbReference type="WormBase" id="R166.5b"/>
    </source>
</evidence>